<feature type="chain" id="PRO_0000436032" description="Protein LNK2">
    <location>
        <begin position="1"/>
        <end position="663"/>
    </location>
</feature>
<feature type="region of interest" description="Disordered" evidence="1">
    <location>
        <begin position="528"/>
        <end position="549"/>
    </location>
</feature>
<feature type="region of interest" description="Disordered" evidence="1">
    <location>
        <begin position="590"/>
        <end position="663"/>
    </location>
</feature>
<feature type="compositionally biased region" description="Basic and acidic residues" evidence="1">
    <location>
        <begin position="602"/>
        <end position="629"/>
    </location>
</feature>
<feature type="compositionally biased region" description="Polar residues" evidence="1">
    <location>
        <begin position="639"/>
        <end position="648"/>
    </location>
</feature>
<feature type="splice variant" id="VSP_058216" description="In isoform 2.">
    <location>
        <begin position="1"/>
        <end position="80"/>
    </location>
</feature>
<feature type="splice variant" id="VSP_058217" description="In isoform 4.">
    <location>
        <begin position="1"/>
        <end position="11"/>
    </location>
</feature>
<feature type="splice variant" id="VSP_058218" description="In isoform 3.">
    <location>
        <begin position="119"/>
        <end position="150"/>
    </location>
</feature>
<feature type="splice variant" id="VSP_058219" description="In isoform 2 and isoform 5.">
    <location>
        <begin position="120"/>
        <end position="150"/>
    </location>
</feature>
<feature type="splice variant" id="VSP_058220" description="In isoform 2, isoform 3, isoform 4 and isoform 5.">
    <original>DGFAAMMSLYLVMAVSAVVMSYGHLLKI</original>
    <variation>NDVPIFGDGSLSGGDELWSSSKDVSNSPKSLSSMLDSQDLGLDIR</variation>
    <location>
        <begin position="195"/>
        <end position="222"/>
    </location>
</feature>
<sequence length="663" mass="73593">MFDWEEEELTNMIWGDDAETGDHIVPFKVRSEQLNKKEQIEESKTAEQKITGTKIDLHDKNLGSSSSHNVDEGLPQPDFCMSSWPDTSLTNATKVDQDLSATELSKCLAEPVRYDSTRGGAFLLKQSCFTWVRSFQSNHFKSCVLTLFLPEKTSELGKGPDIFHSSDESKEQGDFDDYSWANIGSFDDLDRMFSDGFAAMMSLYLVMAVSAVVMSYGHLLKITEFEQQENQQFPLTGKANGLSSQSVPSVRVTLKADQYREHKGQPSVEDQPYQQNKMMKFSKMPGTSEARPFQELYGQRIPFSNSAGKCVNQLAPPQSSLMAVNLLSESEGSGTSHYSHMPNQYMANSAFGNLANPYSSVPVISAVQHPDVRNQLMHPSYNPATATSVNMATDASARPSTMTPQEKLEKLRRRQQMQAMLAIQRQQQQFSHQVPVADQSITQNCLQDIPLQLVDKTNLQGLTAMPSFDPSSSLEQDDSGKFAAAVDNSAEFAVLYRLQDVVAKLDMGTRTCIRDSLFRLAGSAAQRHYTSDTSHSNKTSQDDQEVIPREESRYRYAGMPDTEAVTNPTDRTVAHLLFHRPFDMLAAKRMEGPESPASSKMGTEEKGNFPKCSIRETHLTKQKAQKEEGPADSLALGNAPNSGSSSTVGERVVEASQGNKRKL</sequence>
<evidence type="ECO:0000256" key="1">
    <source>
        <dbReference type="SAM" id="MobiDB-lite"/>
    </source>
</evidence>
<evidence type="ECO:0000269" key="2">
    <source>
    </source>
</evidence>
<evidence type="ECO:0000269" key="3">
    <source>
    </source>
</evidence>
<evidence type="ECO:0000269" key="4">
    <source>
    </source>
</evidence>
<evidence type="ECO:0000269" key="5">
    <source>
    </source>
</evidence>
<evidence type="ECO:0000269" key="6">
    <source>
    </source>
</evidence>
<evidence type="ECO:0000303" key="7">
    <source>
    </source>
</evidence>
<evidence type="ECO:0000312" key="8">
    <source>
        <dbReference type="Araport" id="AT3G54500"/>
    </source>
</evidence>
<evidence type="ECO:0000312" key="9">
    <source>
        <dbReference type="EMBL" id="CAB77570.1"/>
    </source>
</evidence>
<evidence type="ECO:0000312" key="10">
    <source>
        <dbReference type="Proteomes" id="UP000006548"/>
    </source>
</evidence>
<keyword id="KW-0010">Activator</keyword>
<keyword id="KW-0025">Alternative splicing</keyword>
<keyword id="KW-0090">Biological rhythms</keyword>
<keyword id="KW-0539">Nucleus</keyword>
<keyword id="KW-1185">Reference proteome</keyword>
<keyword id="KW-0804">Transcription</keyword>
<keyword id="KW-0805">Transcription regulation</keyword>
<protein>
    <recommendedName>
        <fullName evidence="7">Protein LNK2</fullName>
    </recommendedName>
    <alternativeName>
        <fullName evidence="7">Night light-inducible and clock-regulated 2</fullName>
    </alternativeName>
</protein>
<organism evidence="10">
    <name type="scientific">Arabidopsis thaliana</name>
    <name type="common">Mouse-ear cress</name>
    <dbReference type="NCBI Taxonomy" id="3702"/>
    <lineage>
        <taxon>Eukaryota</taxon>
        <taxon>Viridiplantae</taxon>
        <taxon>Streptophyta</taxon>
        <taxon>Embryophyta</taxon>
        <taxon>Tracheophyta</taxon>
        <taxon>Spermatophyta</taxon>
        <taxon>Magnoliopsida</taxon>
        <taxon>eudicotyledons</taxon>
        <taxon>Gunneridae</taxon>
        <taxon>Pentapetalae</taxon>
        <taxon>rosids</taxon>
        <taxon>malvids</taxon>
        <taxon>Brassicales</taxon>
        <taxon>Brassicaceae</taxon>
        <taxon>Camelineae</taxon>
        <taxon>Arabidopsis</taxon>
    </lineage>
</organism>
<name>LNK2_ARATH</name>
<accession>F4JCX9</accession>
<accession>A0A1I9LQ06</accession>
<accession>A0A1I9LQ07</accession>
<accession>F4JCX8</accession>
<accession>F4JCY0</accession>
<accession>F4JCY1</accession>
<accession>Q9M1H7</accession>
<comment type="function">
    <text evidence="2 4 5 6">Transcriptional coactivator necessary for expression of the clock genes PRR5 and TOC1 (PubMed:25012192, PubMed:25848708). Antagonizes REV8 function in the regulation of anthocyanin accumulation (PubMed:25848001). Involved in red light input to the clock (PubMed:25012192). Activates clock-controlled genes with afternoon peak (PubMed:23818596). Mediates light inhibition of hypocotyl elongation (PubMed:23818596). Unable to bind to DNA, but recruited to the evening element (EE)-containing region of the PRR5 and TOC1 promoters through its interaction with the DNA binding proteins REV8 and REV4 (PubMed:25012192, PubMed:25848708).</text>
</comment>
<comment type="subunit">
    <text evidence="4 5">Interacts with CCA1, LHY, REV4 and REV8, but not with PRR7 or PRR9.</text>
</comment>
<comment type="subcellular location">
    <subcellularLocation>
        <location evidence="4">Nucleus</location>
    </subcellularLocation>
</comment>
<comment type="alternative products">
    <event type="alternative splicing"/>
    <isoform>
        <id>F4JCX9-1</id>
        <name>1</name>
        <sequence type="displayed"/>
    </isoform>
    <isoform>
        <id>F4JCX9-2</id>
        <name>2</name>
        <sequence type="described" ref="VSP_058216 VSP_058219 VSP_058220"/>
    </isoform>
    <isoform>
        <id>F4JCX9-3</id>
        <name>3</name>
        <sequence type="described" ref="VSP_058218 VSP_058220"/>
    </isoform>
    <isoform>
        <id>F4JCX9-4</id>
        <name>4</name>
        <sequence type="described" ref="VSP_058217 VSP_058220"/>
    </isoform>
    <isoform>
        <id>F4JCX9-5</id>
        <name>5</name>
        <sequence type="described" ref="VSP_058219 VSP_058220"/>
    </isoform>
</comment>
<comment type="tissue specificity">
    <text evidence="4">Expressed in roots, stems, leaves, seedlings, cotyledons, inflorescences and siliques. Highest expression in root tips, young leaves and vasculatur tissues.</text>
</comment>
<comment type="induction">
    <text evidence="2 3 4">Circadian-regulation (PubMed:23818596, PubMed:25012192). Maximum levels of expression in the subjective morning (PubMed:23818596, PubMed:25012192). Up-regulated by a light pulse in the middle of the night via the phytochrome family of red/far-red light photoreceptors (PubMed:23818596, PubMed:25012192). Up-regulated following a temperature upshift during the dark period (PubMed:24690904). Repressed by members of the TOC1/PRR1 family of clock genes (PubMed:23818596).</text>
</comment>
<comment type="disruption phenotype">
    <text evidence="2 4">No differences in hypocotyl length when grown in complete darkness, but longer hypocotyls in plants under continuous white or red light (PubMed:23818596). Lengthened circadian cycle (PubMed:25012192).</text>
</comment>
<dbReference type="EMBL" id="AL138656">
    <property type="protein sequence ID" value="CAB77570.1"/>
    <property type="molecule type" value="Genomic_DNA"/>
</dbReference>
<dbReference type="EMBL" id="CP002686">
    <property type="protein sequence ID" value="AEE79239.1"/>
    <property type="molecule type" value="Genomic_DNA"/>
</dbReference>
<dbReference type="EMBL" id="CP002686">
    <property type="protein sequence ID" value="AEE79242.1"/>
    <property type="molecule type" value="Genomic_DNA"/>
</dbReference>
<dbReference type="EMBL" id="CP002686">
    <property type="protein sequence ID" value="ANM64663.1"/>
    <property type="molecule type" value="Genomic_DNA"/>
</dbReference>
<dbReference type="EMBL" id="CP002686">
    <property type="protein sequence ID" value="ANM64664.1"/>
    <property type="molecule type" value="Genomic_DNA"/>
</dbReference>
<dbReference type="EMBL" id="CP002686">
    <property type="protein sequence ID" value="ANM64665.1"/>
    <property type="molecule type" value="Genomic_DNA"/>
</dbReference>
<dbReference type="EMBL" id="CP002686">
    <property type="protein sequence ID" value="ANM64666.1"/>
    <property type="molecule type" value="Genomic_DNA"/>
</dbReference>
<dbReference type="PIR" id="T47609">
    <property type="entry name" value="T47609"/>
</dbReference>
<dbReference type="RefSeq" id="NP_001190089.1">
    <molecule id="F4JCX9-1"/>
    <property type="nucleotide sequence ID" value="NM_001203160.1"/>
</dbReference>
<dbReference type="RefSeq" id="NP_001326676.1">
    <molecule id="F4JCX9-2"/>
    <property type="nucleotide sequence ID" value="NM_001339675.1"/>
</dbReference>
<dbReference type="RefSeq" id="NP_001326677.1">
    <molecule id="F4JCX9-5"/>
    <property type="nucleotide sequence ID" value="NM_001339676.1"/>
</dbReference>
<dbReference type="RefSeq" id="NP_001326678.1">
    <molecule id="F4JCX9-5"/>
    <property type="nucleotide sequence ID" value="NM_001339674.1"/>
</dbReference>
<dbReference type="RefSeq" id="NP_191014.2">
    <molecule id="F4JCX9-3"/>
    <property type="nucleotide sequence ID" value="NM_115307.5"/>
</dbReference>
<dbReference type="RefSeq" id="NP_974432.2">
    <molecule id="F4JCX9-2"/>
    <property type="nucleotide sequence ID" value="NM_202703.3"/>
</dbReference>
<dbReference type="FunCoup" id="F4JCX9">
    <property type="interactions" value="168"/>
</dbReference>
<dbReference type="STRING" id="3702.F4JCX9"/>
<dbReference type="iPTMnet" id="F4JCX9"/>
<dbReference type="PaxDb" id="3702-AT3G54500.3"/>
<dbReference type="ProteomicsDB" id="238475">
    <molecule id="F4JCX9-1"/>
</dbReference>
<dbReference type="EnsemblPlants" id="AT3G54500.1">
    <molecule id="F4JCX9-3"/>
    <property type="protein sequence ID" value="AT3G54500.1"/>
    <property type="gene ID" value="AT3G54500"/>
</dbReference>
<dbReference type="EnsemblPlants" id="AT3G54500.4">
    <molecule id="F4JCX9-1"/>
    <property type="protein sequence ID" value="AT3G54500.4"/>
    <property type="gene ID" value="AT3G54500"/>
</dbReference>
<dbReference type="EnsemblPlants" id="AT3G54500.5">
    <molecule id="F4JCX9-5"/>
    <property type="protein sequence ID" value="AT3G54500.5"/>
    <property type="gene ID" value="AT3G54500"/>
</dbReference>
<dbReference type="EnsemblPlants" id="AT3G54500.6">
    <molecule id="F4JCX9-2"/>
    <property type="protein sequence ID" value="AT3G54500.6"/>
    <property type="gene ID" value="AT3G54500"/>
</dbReference>
<dbReference type="EnsemblPlants" id="AT3G54500.7">
    <molecule id="F4JCX9-5"/>
    <property type="protein sequence ID" value="AT3G54500.7"/>
    <property type="gene ID" value="AT3G54500"/>
</dbReference>
<dbReference type="EnsemblPlants" id="AT3G54500.8">
    <molecule id="F4JCX9-2"/>
    <property type="protein sequence ID" value="AT3G54500.8"/>
    <property type="gene ID" value="AT3G54500"/>
</dbReference>
<dbReference type="GeneID" id="824615"/>
<dbReference type="Gramene" id="AT3G54500.1">
    <molecule id="F4JCX9-3"/>
    <property type="protein sequence ID" value="AT3G54500.1"/>
    <property type="gene ID" value="AT3G54500"/>
</dbReference>
<dbReference type="Gramene" id="AT3G54500.4">
    <molecule id="F4JCX9-1"/>
    <property type="protein sequence ID" value="AT3G54500.4"/>
    <property type="gene ID" value="AT3G54500"/>
</dbReference>
<dbReference type="Gramene" id="AT3G54500.5">
    <molecule id="F4JCX9-5"/>
    <property type="protein sequence ID" value="AT3G54500.5"/>
    <property type="gene ID" value="AT3G54500"/>
</dbReference>
<dbReference type="Gramene" id="AT3G54500.6">
    <molecule id="F4JCX9-2"/>
    <property type="protein sequence ID" value="AT3G54500.6"/>
    <property type="gene ID" value="AT3G54500"/>
</dbReference>
<dbReference type="Gramene" id="AT3G54500.7">
    <molecule id="F4JCX9-5"/>
    <property type="protein sequence ID" value="AT3G54500.7"/>
    <property type="gene ID" value="AT3G54500"/>
</dbReference>
<dbReference type="Gramene" id="AT3G54500.8">
    <molecule id="F4JCX9-2"/>
    <property type="protein sequence ID" value="AT3G54500.8"/>
    <property type="gene ID" value="AT3G54500"/>
</dbReference>
<dbReference type="KEGG" id="ath:AT3G54500"/>
<dbReference type="Araport" id="AT3G54500"/>
<dbReference type="TAIR" id="AT3G54500">
    <property type="gene designation" value="LNK2"/>
</dbReference>
<dbReference type="eggNOG" id="ENOG502QS7P">
    <property type="taxonomic scope" value="Eukaryota"/>
</dbReference>
<dbReference type="InParanoid" id="F4JCX9"/>
<dbReference type="OMA" id="NQFPKEG"/>
<dbReference type="OrthoDB" id="618331at2759"/>
<dbReference type="PRO" id="PR:F4JCX9"/>
<dbReference type="Proteomes" id="UP000006548">
    <property type="component" value="Chromosome 3"/>
</dbReference>
<dbReference type="ExpressionAtlas" id="F4JCX9">
    <property type="expression patterns" value="baseline and differential"/>
</dbReference>
<dbReference type="GO" id="GO:0005634">
    <property type="term" value="C:nucleus"/>
    <property type="evidence" value="ECO:0000314"/>
    <property type="project" value="TAIR"/>
</dbReference>
<dbReference type="GO" id="GO:0003712">
    <property type="term" value="F:transcription coregulator activity"/>
    <property type="evidence" value="ECO:0000314"/>
    <property type="project" value="TAIR"/>
</dbReference>
<dbReference type="GO" id="GO:0032922">
    <property type="term" value="P:circadian regulation of gene expression"/>
    <property type="evidence" value="ECO:0000314"/>
    <property type="project" value="TAIR"/>
</dbReference>
<dbReference type="GO" id="GO:0009649">
    <property type="term" value="P:entrainment of circadian clock"/>
    <property type="evidence" value="ECO:0000316"/>
    <property type="project" value="TAIR"/>
</dbReference>
<dbReference type="GO" id="GO:0006355">
    <property type="term" value="P:regulation of DNA-templated transcription"/>
    <property type="evidence" value="ECO:0007669"/>
    <property type="project" value="InterPro"/>
</dbReference>
<dbReference type="InterPro" id="IPR039928">
    <property type="entry name" value="LNK"/>
</dbReference>
<dbReference type="PANTHER" id="PTHR33334">
    <property type="entry name" value="PROTEIN LNK1"/>
    <property type="match status" value="1"/>
</dbReference>
<dbReference type="PANTHER" id="PTHR33334:SF5">
    <property type="entry name" value="PROTEIN LNK2"/>
    <property type="match status" value="1"/>
</dbReference>
<reference key="1">
    <citation type="journal article" date="2000" name="Nature">
        <title>Sequence and analysis of chromosome 3 of the plant Arabidopsis thaliana.</title>
        <authorList>
            <person name="Salanoubat M."/>
            <person name="Lemcke K."/>
            <person name="Rieger M."/>
            <person name="Ansorge W."/>
            <person name="Unseld M."/>
            <person name="Fartmann B."/>
            <person name="Valle G."/>
            <person name="Bloecker H."/>
            <person name="Perez-Alonso M."/>
            <person name="Obermaier B."/>
            <person name="Delseny M."/>
            <person name="Boutry M."/>
            <person name="Grivell L.A."/>
            <person name="Mache R."/>
            <person name="Puigdomenech P."/>
            <person name="De Simone V."/>
            <person name="Choisne N."/>
            <person name="Artiguenave F."/>
            <person name="Robert C."/>
            <person name="Brottier P."/>
            <person name="Wincker P."/>
            <person name="Cattolico L."/>
            <person name="Weissenbach J."/>
            <person name="Saurin W."/>
            <person name="Quetier F."/>
            <person name="Schaefer M."/>
            <person name="Mueller-Auer S."/>
            <person name="Gabel C."/>
            <person name="Fuchs M."/>
            <person name="Benes V."/>
            <person name="Wurmbach E."/>
            <person name="Drzonek H."/>
            <person name="Erfle H."/>
            <person name="Jordan N."/>
            <person name="Bangert S."/>
            <person name="Wiedelmann R."/>
            <person name="Kranz H."/>
            <person name="Voss H."/>
            <person name="Holland R."/>
            <person name="Brandt P."/>
            <person name="Nyakatura G."/>
            <person name="Vezzi A."/>
            <person name="D'Angelo M."/>
            <person name="Pallavicini A."/>
            <person name="Toppo S."/>
            <person name="Simionati B."/>
            <person name="Conrad A."/>
            <person name="Hornischer K."/>
            <person name="Kauer G."/>
            <person name="Loehnert T.-H."/>
            <person name="Nordsiek G."/>
            <person name="Reichelt J."/>
            <person name="Scharfe M."/>
            <person name="Schoen O."/>
            <person name="Bargues M."/>
            <person name="Terol J."/>
            <person name="Climent J."/>
            <person name="Navarro P."/>
            <person name="Collado C."/>
            <person name="Perez-Perez A."/>
            <person name="Ottenwaelder B."/>
            <person name="Duchemin D."/>
            <person name="Cooke R."/>
            <person name="Laudie M."/>
            <person name="Berger-Llauro C."/>
            <person name="Purnelle B."/>
            <person name="Masuy D."/>
            <person name="de Haan M."/>
            <person name="Maarse A.C."/>
            <person name="Alcaraz J.-P."/>
            <person name="Cottet A."/>
            <person name="Casacuberta E."/>
            <person name="Monfort A."/>
            <person name="Argiriou A."/>
            <person name="Flores M."/>
            <person name="Liguori R."/>
            <person name="Vitale D."/>
            <person name="Mannhaupt G."/>
            <person name="Haase D."/>
            <person name="Schoof H."/>
            <person name="Rudd S."/>
            <person name="Zaccaria P."/>
            <person name="Mewes H.-W."/>
            <person name="Mayer K.F.X."/>
            <person name="Kaul S."/>
            <person name="Town C.D."/>
            <person name="Koo H.L."/>
            <person name="Tallon L.J."/>
            <person name="Jenkins J."/>
            <person name="Rooney T."/>
            <person name="Rizzo M."/>
            <person name="Walts A."/>
            <person name="Utterback T."/>
            <person name="Fujii C.Y."/>
            <person name="Shea T.P."/>
            <person name="Creasy T.H."/>
            <person name="Haas B."/>
            <person name="Maiti R."/>
            <person name="Wu D."/>
            <person name="Peterson J."/>
            <person name="Van Aken S."/>
            <person name="Pai G."/>
            <person name="Militscher J."/>
            <person name="Sellers P."/>
            <person name="Gill J.E."/>
            <person name="Feldblyum T.V."/>
            <person name="Preuss D."/>
            <person name="Lin X."/>
            <person name="Nierman W.C."/>
            <person name="Salzberg S.L."/>
            <person name="White O."/>
            <person name="Venter J.C."/>
            <person name="Fraser C.M."/>
            <person name="Kaneko T."/>
            <person name="Nakamura Y."/>
            <person name="Sato S."/>
            <person name="Kato T."/>
            <person name="Asamizu E."/>
            <person name="Sasamoto S."/>
            <person name="Kimura T."/>
            <person name="Idesawa K."/>
            <person name="Kawashima K."/>
            <person name="Kishida Y."/>
            <person name="Kiyokawa C."/>
            <person name="Kohara M."/>
            <person name="Matsumoto M."/>
            <person name="Matsuno A."/>
            <person name="Muraki A."/>
            <person name="Nakayama S."/>
            <person name="Nakazaki N."/>
            <person name="Shinpo S."/>
            <person name="Takeuchi C."/>
            <person name="Wada T."/>
            <person name="Watanabe A."/>
            <person name="Yamada M."/>
            <person name="Yasuda M."/>
            <person name="Tabata S."/>
        </authorList>
    </citation>
    <scope>NUCLEOTIDE SEQUENCE [LARGE SCALE GENOMIC DNA]</scope>
    <source>
        <strain>cv. Columbia</strain>
    </source>
</reference>
<reference key="2">
    <citation type="journal article" date="2017" name="Plant J.">
        <title>Araport11: a complete reannotation of the Arabidopsis thaliana reference genome.</title>
        <authorList>
            <person name="Cheng C.Y."/>
            <person name="Krishnakumar V."/>
            <person name="Chan A.P."/>
            <person name="Thibaud-Nissen F."/>
            <person name="Schobel S."/>
            <person name="Town C.D."/>
        </authorList>
    </citation>
    <scope>GENOME REANNOTATION</scope>
    <source>
        <strain>cv. Columbia</strain>
    </source>
</reference>
<reference key="3">
    <citation type="journal article" date="2013" name="Proc. Natl. Acad. Sci. U.S.A.">
        <title>LNK genes integrate light and clock signaling networks at the core of the Arabidopsis oscillator.</title>
        <authorList>
            <person name="Rugnone M.L."/>
            <person name="Faigon Soverna A."/>
            <person name="Sanchez S.E."/>
            <person name="Schlaen R.G."/>
            <person name="Hernando C.E."/>
            <person name="Seymour D.K."/>
            <person name="Mancini E."/>
            <person name="Chernomoretz A."/>
            <person name="Weigel D."/>
            <person name="Mas P."/>
            <person name="Yanovsky M.J."/>
        </authorList>
    </citation>
    <scope>FUNCTION</scope>
    <scope>DISRUPTION PHENOTYPE</scope>
    <scope>INDUCTION</scope>
    <scope>GENE FAMILY</scope>
    <scope>NOMENCLATURE</scope>
</reference>
<reference key="4">
    <citation type="journal article" date="2014" name="Plant Signal. Behav.">
        <title>The LNK1 night light-inducible and clock-regulated gene is induced also in response to warm-night through the circadian clock nighttime repressor in Arabidopsis thaliana.</title>
        <authorList>
            <person name="Mizuno T."/>
            <person name="Takeuchi A."/>
            <person name="Nomoto Y."/>
            <person name="Nakamichi N."/>
            <person name="Yamashino T."/>
        </authorList>
    </citation>
    <scope>INDUCTION BY HEAT</scope>
</reference>
<reference key="5">
    <citation type="journal article" date="2014" name="Plant Cell">
        <title>LNK1 and LNK2 are transcriptional coactivators in the Arabidopsis circadian oscillator.</title>
        <authorList>
            <person name="Xie Q."/>
            <person name="Wang P."/>
            <person name="Liu X."/>
            <person name="Yuan L."/>
            <person name="Wang L."/>
            <person name="Zhang C."/>
            <person name="Li Y."/>
            <person name="Xing H."/>
            <person name="Zhi L."/>
            <person name="Yue Z."/>
            <person name="Zhao C."/>
            <person name="McClung C.R."/>
            <person name="Xu X."/>
        </authorList>
    </citation>
    <scope>FUNCTION</scope>
    <scope>SUBCELLULAR LOCATION</scope>
    <scope>DISRUPTION PHENOTYPE</scope>
    <scope>INDUCTION</scope>
    <scope>TISSUE SPECIFICITY</scope>
    <scope>INTERACTION WITH CCA1; LHY; REV4 AND REV8</scope>
</reference>
<reference key="6">
    <citation type="journal article" date="2015" name="Plant Signal. Behav.">
        <title>LNK1 and LNK2 recruitment to the evening element require morning expressed circadian related MYB-like transcription factors.</title>
        <authorList>
            <person name="Xing H."/>
            <person name="Wang P."/>
            <person name="Cui X."/>
            <person name="Zhang C."/>
            <person name="Wang L."/>
            <person name="Liu X."/>
            <person name="Yuan L."/>
            <person name="Li Y."/>
            <person name="Xie Q."/>
            <person name="Xu X."/>
        </authorList>
    </citation>
    <scope>FUNCTION</scope>
</reference>
<reference key="7">
    <citation type="journal article" date="2015" name="Proc. Natl. Acad. Sci. U.S.A.">
        <title>Time-dependent sequestration of RVE8 by LNK proteins shapes the diurnal oscillation of anthocyanin biosynthesis.</title>
        <authorList>
            <person name="Perez-Garcia P."/>
            <person name="Ma Y."/>
            <person name="Yanovsky M.J."/>
            <person name="Mas P."/>
        </authorList>
    </citation>
    <scope>FUNCTION</scope>
    <scope>INTERACTION WITH RVE8</scope>
</reference>
<gene>
    <name evidence="7" type="primary">LNK2</name>
    <name evidence="8" type="ordered locus">At3g54500</name>
    <name evidence="9" type="ORF">T14E10.70</name>
</gene>
<proteinExistence type="evidence at protein level"/>